<feature type="chain" id="PRO_0000358713" description="NADH-quinone oxidoreductase subunit C/D">
    <location>
        <begin position="1"/>
        <end position="598"/>
    </location>
</feature>
<feature type="region of interest" description="NADH dehydrogenase I subunit C" evidence="1">
    <location>
        <begin position="1"/>
        <end position="189"/>
    </location>
</feature>
<feature type="region of interest" description="NADH dehydrogenase I subunit D" evidence="1">
    <location>
        <begin position="213"/>
        <end position="598"/>
    </location>
</feature>
<gene>
    <name evidence="1" type="primary">nuoC</name>
    <name evidence="1" type="synonym">nuoCD</name>
    <name evidence="1" type="synonym">nuoD</name>
    <name type="ordered locus">YPK_1562</name>
</gene>
<evidence type="ECO:0000255" key="1">
    <source>
        <dbReference type="HAMAP-Rule" id="MF_01359"/>
    </source>
</evidence>
<proteinExistence type="inferred from homology"/>
<keyword id="KW-0997">Cell inner membrane</keyword>
<keyword id="KW-1003">Cell membrane</keyword>
<keyword id="KW-0472">Membrane</keyword>
<keyword id="KW-0511">Multifunctional enzyme</keyword>
<keyword id="KW-0520">NAD</keyword>
<keyword id="KW-0874">Quinone</keyword>
<keyword id="KW-1278">Translocase</keyword>
<keyword id="KW-0813">Transport</keyword>
<keyword id="KW-0830">Ubiquinone</keyword>
<protein>
    <recommendedName>
        <fullName evidence="1">NADH-quinone oxidoreductase subunit C/D</fullName>
        <ecNumber evidence="1">7.1.1.-</ecNumber>
    </recommendedName>
    <alternativeName>
        <fullName evidence="1">NADH dehydrogenase I subunit C/D</fullName>
    </alternativeName>
    <alternativeName>
        <fullName evidence="1">NDH-1 subunit C/D</fullName>
    </alternativeName>
</protein>
<comment type="function">
    <text evidence="1">NDH-1 shuttles electrons from NADH, via FMN and iron-sulfur (Fe-S) centers, to quinones in the respiratory chain. The immediate electron acceptor for the enzyme in this species is believed to be ubiquinone. Couples the redox reaction to proton translocation (for every two electrons transferred, four hydrogen ions are translocated across the cytoplasmic membrane), and thus conserves the redox energy in a proton gradient.</text>
</comment>
<comment type="catalytic activity">
    <reaction evidence="1">
        <text>a quinone + NADH + 5 H(+)(in) = a quinol + NAD(+) + 4 H(+)(out)</text>
        <dbReference type="Rhea" id="RHEA:57888"/>
        <dbReference type="ChEBI" id="CHEBI:15378"/>
        <dbReference type="ChEBI" id="CHEBI:24646"/>
        <dbReference type="ChEBI" id="CHEBI:57540"/>
        <dbReference type="ChEBI" id="CHEBI:57945"/>
        <dbReference type="ChEBI" id="CHEBI:132124"/>
    </reaction>
</comment>
<comment type="subunit">
    <text evidence="1">NDH-1 is composed of 13 different subunits. Subunits NuoB, CD, E, F, and G constitute the peripheral sector of the complex.</text>
</comment>
<comment type="subcellular location">
    <subcellularLocation>
        <location evidence="1">Cell inner membrane</location>
        <topology evidence="1">Peripheral membrane protein</topology>
        <orientation evidence="1">Cytoplasmic side</orientation>
    </subcellularLocation>
</comment>
<comment type="similarity">
    <text evidence="1">In the N-terminal section; belongs to the complex I 30 kDa subunit family.</text>
</comment>
<comment type="similarity">
    <text evidence="1">In the C-terminal section; belongs to the complex I 49 kDa subunit family.</text>
</comment>
<name>NUOCD_YERPY</name>
<reference key="1">
    <citation type="submission" date="2008-02" db="EMBL/GenBank/DDBJ databases">
        <title>Complete sequence of Yersinia pseudotuberculosis YPIII.</title>
        <authorList>
            <consortium name="US DOE Joint Genome Institute"/>
            <person name="Copeland A."/>
            <person name="Lucas S."/>
            <person name="Lapidus A."/>
            <person name="Glavina del Rio T."/>
            <person name="Dalin E."/>
            <person name="Tice H."/>
            <person name="Bruce D."/>
            <person name="Goodwin L."/>
            <person name="Pitluck S."/>
            <person name="Munk A.C."/>
            <person name="Brettin T."/>
            <person name="Detter J.C."/>
            <person name="Han C."/>
            <person name="Tapia R."/>
            <person name="Schmutz J."/>
            <person name="Larimer F."/>
            <person name="Land M."/>
            <person name="Hauser L."/>
            <person name="Challacombe J.F."/>
            <person name="Green L."/>
            <person name="Lindler L.E."/>
            <person name="Nikolich M.P."/>
            <person name="Richardson P."/>
        </authorList>
    </citation>
    <scope>NUCLEOTIDE SEQUENCE [LARGE SCALE GENOMIC DNA]</scope>
    <source>
        <strain>YPIII</strain>
    </source>
</reference>
<accession>B1JGL5</accession>
<sequence length="598" mass="68886">MTDLTTSDSLQPAWQTRDHLDDPVIGELSNRFGPEAFVVQATRTGMPVVWVKREQLLEVMSFLRKQPKPYVMLFDLHGVDERLRTHRQGLPDADFSVFYHLLSIERNRDIMLKVALSEKDLHVSTATKIFPNANWYERETWEMFGITFDGHPHLTRIMMPQSWEGHPLRKDYPARATEFDPYVLTKQKEDLEMESLTFKPEDWGMKRGTENEDFMFLNLGPNHPSSHGAFRIVLQLDGEEIIDCVPDVGYHHRGAEKMGERQSWHSYIPYTDRIEYLGGCVNEMPYVLAVEKLAGIVVPDRVNTIRVMLSELFRINSHLLYISTFIQDVGAMTPVFFAFTDRQKVYDVIEAITGFRMHPAWFRIGGVAHDLPRGWERLLRDFLDWMPKRLDSYVKAALQNSILKGRSVGVAAYNAKEALEWGVTGAGLRATGVEFDVRKWRPYSGYENFDFEVPVGNNGDCYDRVMLKVEELRQSLRILEQCYKNMPEGPFKADHPLTTPPPKERTLQHIETLITHFLQVSWGPVMPANESFQMIEATKGINSYYLTSDGSTMSYRTRIRTPSYAHLQQIPSVIRGSLVSDLIVYLGSIDFVMSDVDR</sequence>
<dbReference type="EC" id="7.1.1.-" evidence="1"/>
<dbReference type="EMBL" id="CP000950">
    <property type="protein sequence ID" value="ACA67855.1"/>
    <property type="molecule type" value="Genomic_DNA"/>
</dbReference>
<dbReference type="RefSeq" id="WP_002210277.1">
    <property type="nucleotide sequence ID" value="NZ_CP009792.1"/>
</dbReference>
<dbReference type="SMR" id="B1JGL5"/>
<dbReference type="GeneID" id="57976136"/>
<dbReference type="KEGG" id="ypy:YPK_1562"/>
<dbReference type="PATRIC" id="fig|502800.11.peg.2206"/>
<dbReference type="GO" id="GO:0030964">
    <property type="term" value="C:NADH dehydrogenase complex"/>
    <property type="evidence" value="ECO:0007669"/>
    <property type="project" value="InterPro"/>
</dbReference>
<dbReference type="GO" id="GO:0005886">
    <property type="term" value="C:plasma membrane"/>
    <property type="evidence" value="ECO:0007669"/>
    <property type="project" value="UniProtKB-SubCell"/>
</dbReference>
<dbReference type="GO" id="GO:0051287">
    <property type="term" value="F:NAD binding"/>
    <property type="evidence" value="ECO:0007669"/>
    <property type="project" value="InterPro"/>
</dbReference>
<dbReference type="GO" id="GO:0008137">
    <property type="term" value="F:NADH dehydrogenase (ubiquinone) activity"/>
    <property type="evidence" value="ECO:0007669"/>
    <property type="project" value="InterPro"/>
</dbReference>
<dbReference type="GO" id="GO:0050136">
    <property type="term" value="F:NADH:ubiquinone reductase (non-electrogenic) activity"/>
    <property type="evidence" value="ECO:0007669"/>
    <property type="project" value="UniProtKB-UniRule"/>
</dbReference>
<dbReference type="GO" id="GO:0048038">
    <property type="term" value="F:quinone binding"/>
    <property type="evidence" value="ECO:0007669"/>
    <property type="project" value="UniProtKB-KW"/>
</dbReference>
<dbReference type="FunFam" id="1.10.645.10:FF:000001">
    <property type="entry name" value="NADH-quinone oxidoreductase subunit C/D"/>
    <property type="match status" value="1"/>
</dbReference>
<dbReference type="FunFam" id="3.30.460.80:FF:000001">
    <property type="entry name" value="NADH-quinone oxidoreductase subunit C/D"/>
    <property type="match status" value="1"/>
</dbReference>
<dbReference type="Gene3D" id="1.10.645.10">
    <property type="entry name" value="Cytochrome-c3 Hydrogenase, chain B"/>
    <property type="match status" value="1"/>
</dbReference>
<dbReference type="Gene3D" id="3.30.460.80">
    <property type="entry name" value="NADH:ubiquinone oxidoreductase, 30kDa subunit"/>
    <property type="match status" value="1"/>
</dbReference>
<dbReference type="HAMAP" id="MF_01357">
    <property type="entry name" value="NDH1_NuoC"/>
    <property type="match status" value="1"/>
</dbReference>
<dbReference type="HAMAP" id="MF_01359">
    <property type="entry name" value="NDH1_NuoCD_1"/>
    <property type="match status" value="1"/>
</dbReference>
<dbReference type="HAMAP" id="MF_01358">
    <property type="entry name" value="NDH1_NuoD"/>
    <property type="match status" value="1"/>
</dbReference>
<dbReference type="InterPro" id="IPR010218">
    <property type="entry name" value="NADH_DH_suC"/>
</dbReference>
<dbReference type="InterPro" id="IPR023062">
    <property type="entry name" value="NADH_DH_suCD"/>
</dbReference>
<dbReference type="InterPro" id="IPR001135">
    <property type="entry name" value="NADH_Q_OxRdtase_suD"/>
</dbReference>
<dbReference type="InterPro" id="IPR037232">
    <property type="entry name" value="NADH_quin_OxRdtase_su_C/D-like"/>
</dbReference>
<dbReference type="InterPro" id="IPR001268">
    <property type="entry name" value="NADH_UbQ_OxRdtase_30kDa_su"/>
</dbReference>
<dbReference type="InterPro" id="IPR014029">
    <property type="entry name" value="NADH_UbQ_OxRdtase_49kDa_CS"/>
</dbReference>
<dbReference type="InterPro" id="IPR022885">
    <property type="entry name" value="NDH1_su_D/H"/>
</dbReference>
<dbReference type="InterPro" id="IPR029014">
    <property type="entry name" value="NiFe-Hase_large"/>
</dbReference>
<dbReference type="NCBIfam" id="TIGR01961">
    <property type="entry name" value="NuoC_fam"/>
    <property type="match status" value="1"/>
</dbReference>
<dbReference type="NCBIfam" id="TIGR01962">
    <property type="entry name" value="NuoD"/>
    <property type="match status" value="1"/>
</dbReference>
<dbReference type="NCBIfam" id="NF004739">
    <property type="entry name" value="PRK06075.1"/>
    <property type="match status" value="1"/>
</dbReference>
<dbReference type="NCBIfam" id="NF008728">
    <property type="entry name" value="PRK11742.1"/>
    <property type="match status" value="1"/>
</dbReference>
<dbReference type="PANTHER" id="PTHR11993:SF45">
    <property type="entry name" value="NADH-QUINONE OXIDOREDUCTASE SUBUNIT C_D"/>
    <property type="match status" value="1"/>
</dbReference>
<dbReference type="PANTHER" id="PTHR11993">
    <property type="entry name" value="NADH-UBIQUINONE OXIDOREDUCTASE 49 KDA SUBUNIT"/>
    <property type="match status" value="1"/>
</dbReference>
<dbReference type="Pfam" id="PF00329">
    <property type="entry name" value="Complex1_30kDa"/>
    <property type="match status" value="1"/>
</dbReference>
<dbReference type="Pfam" id="PF00346">
    <property type="entry name" value="Complex1_49kDa"/>
    <property type="match status" value="1"/>
</dbReference>
<dbReference type="SUPFAM" id="SSF56762">
    <property type="entry name" value="HydB/Nqo4-like"/>
    <property type="match status" value="1"/>
</dbReference>
<dbReference type="SUPFAM" id="SSF143243">
    <property type="entry name" value="Nqo5-like"/>
    <property type="match status" value="1"/>
</dbReference>
<dbReference type="PROSITE" id="PS00535">
    <property type="entry name" value="COMPLEX1_49K"/>
    <property type="match status" value="1"/>
</dbReference>
<organism>
    <name type="scientific">Yersinia pseudotuberculosis serotype O:3 (strain YPIII)</name>
    <dbReference type="NCBI Taxonomy" id="502800"/>
    <lineage>
        <taxon>Bacteria</taxon>
        <taxon>Pseudomonadati</taxon>
        <taxon>Pseudomonadota</taxon>
        <taxon>Gammaproteobacteria</taxon>
        <taxon>Enterobacterales</taxon>
        <taxon>Yersiniaceae</taxon>
        <taxon>Yersinia</taxon>
    </lineage>
</organism>